<sequence>MGELFRSEEMTLAQLFLQSEAAYCCVSELGELGKVQFRDLNPDVNVFQRKFVNEVRRCEEMDRKLRFVEKEIRKANIPIMDTGENPEVPFPRDMIDLEANFEKIENELKEINTNQEALKRNFLELTELKFILRKTQQFFDEAELHHQQMADPDLLEESSSLLEPNEMGRGAPLRLGFVAGVINRERIPTFERMLWRVCRGNVFLRQAEIENPLEDPVTGDYVHKSVFIIFFQGDQLKNRVKKICEGFRASLYPCPETPQERKEMASGVNTRIDDLQMVLNQTEDHRQRVLQAAAKNIRVWFIKVRKMKAIYHTLNLCNIDVTQKCLIAEVWCPVTDLDSIQFALRRGTEHSGSTVPSILNRMQTNQTPPTYNKTNKFTHGFQNIVDAYGIGTYREINPAPYTVITFPFLFAVMFGDFGHGILMTLFAVWMVLRESRILSQKHENEMFSMVFSGRYIILLMGLFSIYTGLIYNDCFSKSLNIFGSSWSVRPMFTQGNWTEETLLGSSVLQLNPAIPGVFGGPYPFGIDPIWNIATNKLTFLNSFKMKMSVILGIIHMLFGVSLSLFNHIYFKKPLNIYFGFIPEIIFMSSLFGYLVILIFYKWTAYDAHSSRNAPSLLIHFINMFLFSYPESGNAMLYSGQKGIQCFLIVVAMLCVPWMLLFKPLILRHQYLRKKHLGTLNFGGIRVGNGPTEEDAEIIQHDQLSTHSEDAEEFDFGDTMVHQAIHTIEYCLGCISNTASYLRLWALSLAHAQLSEVLWTMVIHIGLHVRSLAGGLGLFFIFAAFATLTVAILLIMEGLSAFLHALRLHWVEFQNKFYTGTGFKFLPFSFEHIREGKFDE</sequence>
<protein>
    <recommendedName>
        <fullName>V-type proton ATPase 116 kDa subunit a 1</fullName>
        <shortName>V-ATPase 116 kDa subunit a 1</shortName>
    </recommendedName>
    <alternativeName>
        <fullName>Clathrin-coated vesicle/synaptic vesicle proton pump 116 kDa subunit</fullName>
    </alternativeName>
    <alternativeName>
        <fullName>Vacuolar adenosine triphosphatase subunit Ac116</fullName>
    </alternativeName>
    <alternativeName>
        <fullName>Vacuolar proton pump subunit 1</fullName>
    </alternativeName>
    <alternativeName>
        <fullName>Vacuolar proton translocating ATPase 116 kDa subunit a isoform 1</fullName>
    </alternativeName>
</protein>
<feature type="chain" id="PRO_0000119212" description="V-type proton ATPase 116 kDa subunit a 1">
    <location>
        <begin position="1"/>
        <end position="839"/>
    </location>
</feature>
<feature type="topological domain" description="Cytoplasmic" evidence="5">
    <location>
        <begin position="1"/>
        <end position="395"/>
    </location>
</feature>
<feature type="transmembrane region" description="Helical" evidence="5">
    <location>
        <begin position="396"/>
        <end position="414"/>
    </location>
</feature>
<feature type="topological domain" description="Vacuolar" evidence="5">
    <location>
        <begin position="415"/>
        <end position="416"/>
    </location>
</feature>
<feature type="transmembrane region" description="Helical" evidence="5">
    <location>
        <begin position="417"/>
        <end position="433"/>
    </location>
</feature>
<feature type="topological domain" description="Cytoplasmic" evidence="5">
    <location>
        <begin position="434"/>
        <end position="448"/>
    </location>
</feature>
<feature type="transmembrane region" description="Helical" evidence="5">
    <location>
        <begin position="449"/>
        <end position="478"/>
    </location>
</feature>
<feature type="topological domain" description="Vacuolar" evidence="5">
    <location>
        <begin position="479"/>
        <end position="542"/>
    </location>
</feature>
<feature type="transmembrane region" description="Helical" evidence="5">
    <location>
        <begin position="543"/>
        <end position="562"/>
    </location>
</feature>
<feature type="topological domain" description="Cytoplasmic" evidence="5">
    <location>
        <begin position="563"/>
        <end position="580"/>
    </location>
</feature>
<feature type="transmembrane region" description="Helical" evidence="5">
    <location>
        <begin position="581"/>
        <end position="601"/>
    </location>
</feature>
<feature type="topological domain" description="Vacuolar" evidence="5">
    <location>
        <begin position="602"/>
        <end position="646"/>
    </location>
</feature>
<feature type="transmembrane region" description="Helical" evidence="5">
    <location>
        <begin position="647"/>
        <end position="666"/>
    </location>
</feature>
<feature type="topological domain" description="Cytoplasmic" evidence="5">
    <location>
        <begin position="667"/>
        <end position="726"/>
    </location>
</feature>
<feature type="transmembrane region" description="Helical" evidence="5">
    <location>
        <begin position="727"/>
        <end position="751"/>
    </location>
</feature>
<feature type="topological domain" description="Vacuolar" evidence="5">
    <location>
        <begin position="752"/>
        <end position="772"/>
    </location>
</feature>
<feature type="transmembrane region" description="Helical" evidence="5">
    <location>
        <begin position="773"/>
        <end position="811"/>
    </location>
</feature>
<feature type="topological domain" description="Cytoplasmic" evidence="5">
    <location>
        <begin position="812"/>
        <end position="839"/>
    </location>
</feature>
<feature type="modified residue" description="Phosphothreonine" evidence="11">
    <location>
        <position position="257"/>
    </location>
</feature>
<feature type="modified residue" description="Phosphothreonine" evidence="4">
    <location>
        <position position="367"/>
    </location>
</feature>
<feature type="modified residue" description="Phosphotyrosine" evidence="10">
    <location>
        <position position="371"/>
    </location>
</feature>
<feature type="splice variant" id="VSP_000342" description="In isoform A1-I and isoform A1-III." evidence="8">
    <location>
        <begin position="142"/>
        <end position="148"/>
    </location>
</feature>
<feature type="splice variant" id="VSP_000343" description="In isoform A1-I." evidence="9">
    <original>E</original>
    <variation>EPTEDEV</variation>
    <location>
        <position position="712"/>
    </location>
</feature>
<feature type="sequence variant">
    <original>L</original>
    <variation>F</variation>
    <location>
        <position position="194"/>
    </location>
</feature>
<feature type="sequence conflict" description="In Ref. 1; AAC83083." evidence="9" ref="1">
    <original>Q</original>
    <variation>N</variation>
    <location>
        <position position="36"/>
    </location>
</feature>
<feature type="sequence conflict" description="In Ref. 1; AAC83083." evidence="9" ref="1">
    <original>VPFPR</original>
    <variation>APLPW</variation>
    <location>
        <begin position="88"/>
        <end position="92"/>
    </location>
</feature>
<feature type="sequence conflict" description="In Ref. 1; AAC83083." evidence="9" ref="1">
    <original>N</original>
    <variation>D</variation>
    <location>
        <position position="112"/>
    </location>
</feature>
<feature type="sequence conflict" description="In Ref. 1; AAC83083." evidence="9" ref="1">
    <original>F</original>
    <variation>S</variation>
    <location>
        <position position="190"/>
    </location>
</feature>
<feature type="sequence conflict" description="In Ref. 1; AAC83083." evidence="9" ref="1">
    <original>K</original>
    <variation>T</variation>
    <location>
        <position position="262"/>
    </location>
</feature>
<feature type="sequence conflict" description="In Ref. 1; AAC83083." evidence="9" ref="1">
    <original>L</original>
    <variation>P</variation>
    <location>
        <position position="337"/>
    </location>
</feature>
<feature type="sequence conflict" description="In Ref. 1; AAC83083." evidence="9" ref="1">
    <original>S</original>
    <variation>F</variation>
    <location>
        <position position="357"/>
    </location>
</feature>
<feature type="sequence conflict" description="In Ref. 1; AAC83083." evidence="9" ref="1">
    <original>G</original>
    <variation>R</variation>
    <location>
        <position position="415"/>
    </location>
</feature>
<feature type="sequence conflict" description="In Ref. 1; AAC83083." evidence="9" ref="1">
    <original>F</original>
    <variation>L</variation>
    <location>
        <position position="518"/>
    </location>
</feature>
<feature type="sequence conflict" description="In Ref. 1; AAC83083." evidence="9" ref="1">
    <original>G</original>
    <variation>W</variation>
    <location>
        <position position="683"/>
    </location>
</feature>
<feature type="sequence conflict" description="In Ref. 1; AAC83083." evidence="9" ref="1">
    <original>H</original>
    <variation>L</variation>
    <location>
        <position position="803"/>
    </location>
</feature>
<proteinExistence type="evidence at protein level"/>
<keyword id="KW-0002">3D-structure</keyword>
<keyword id="KW-0025">Alternative splicing</keyword>
<keyword id="KW-0968">Cytoplasmic vesicle</keyword>
<keyword id="KW-0903">Direct protein sequencing</keyword>
<keyword id="KW-0375">Hydrogen ion transport</keyword>
<keyword id="KW-0406">Ion transport</keyword>
<keyword id="KW-0472">Membrane</keyword>
<keyword id="KW-0597">Phosphoprotein</keyword>
<keyword id="KW-1185">Reference proteome</keyword>
<keyword id="KW-0770">Synapse</keyword>
<keyword id="KW-0812">Transmembrane</keyword>
<keyword id="KW-1133">Transmembrane helix</keyword>
<keyword id="KW-0813">Transport</keyword>
<organism>
    <name type="scientific">Mus musculus</name>
    <name type="common">Mouse</name>
    <dbReference type="NCBI Taxonomy" id="10090"/>
    <lineage>
        <taxon>Eukaryota</taxon>
        <taxon>Metazoa</taxon>
        <taxon>Chordata</taxon>
        <taxon>Craniata</taxon>
        <taxon>Vertebrata</taxon>
        <taxon>Euteleostomi</taxon>
        <taxon>Mammalia</taxon>
        <taxon>Eutheria</taxon>
        <taxon>Euarchontoglires</taxon>
        <taxon>Glires</taxon>
        <taxon>Rodentia</taxon>
        <taxon>Myomorpha</taxon>
        <taxon>Muroidea</taxon>
        <taxon>Muridae</taxon>
        <taxon>Murinae</taxon>
        <taxon>Mus</taxon>
        <taxon>Mus</taxon>
    </lineage>
</organism>
<dbReference type="EMBL" id="U13836">
    <property type="protein sequence ID" value="AAC83083.1"/>
    <property type="molecule type" value="mRNA"/>
</dbReference>
<dbReference type="EMBL" id="AF218249">
    <property type="protein sequence ID" value="AAF59918.1"/>
    <property type="molecule type" value="mRNA"/>
</dbReference>
<dbReference type="EMBL" id="AF218250">
    <property type="protein sequence ID" value="AAF59919.1"/>
    <property type="molecule type" value="mRNA"/>
</dbReference>
<dbReference type="EMBL" id="AF218251">
    <property type="protein sequence ID" value="AAF59920.1"/>
    <property type="molecule type" value="mRNA"/>
</dbReference>
<dbReference type="EMBL" id="AB022321">
    <property type="protein sequence ID" value="BAA93005.1"/>
    <property type="molecule type" value="mRNA"/>
</dbReference>
<dbReference type="EMBL" id="AL591425">
    <property type="status" value="NOT_ANNOTATED_CDS"/>
    <property type="molecule type" value="Genomic_DNA"/>
</dbReference>
<dbReference type="EMBL" id="CH466677">
    <property type="protein sequence ID" value="EDL03866.1"/>
    <property type="molecule type" value="Genomic_DNA"/>
</dbReference>
<dbReference type="CCDS" id="CCDS25443.1">
    <molecule id="Q9Z1G4-2"/>
</dbReference>
<dbReference type="CCDS" id="CCDS56808.1">
    <molecule id="Q9Z1G4-1"/>
</dbReference>
<dbReference type="CCDS" id="CCDS56809.1">
    <molecule id="Q9Z1G4-3"/>
</dbReference>
<dbReference type="RefSeq" id="NP_001229979.1">
    <molecule id="Q9Z1G4-3"/>
    <property type="nucleotide sequence ID" value="NM_001243050.3"/>
</dbReference>
<dbReference type="RefSeq" id="NP_001229980.1">
    <molecule id="Q9Z1G4-1"/>
    <property type="nucleotide sequence ID" value="NM_001243051.3"/>
</dbReference>
<dbReference type="RefSeq" id="NP_001349567.1">
    <molecule id="Q9Z1G4-2"/>
    <property type="nucleotide sequence ID" value="NM_001362638.2"/>
</dbReference>
<dbReference type="RefSeq" id="NP_058616.1">
    <molecule id="Q9Z1G4-2"/>
    <property type="nucleotide sequence ID" value="NM_016920.5"/>
</dbReference>
<dbReference type="PDB" id="9BRA">
    <property type="method" value="EM"/>
    <property type="resolution" value="4.30 A"/>
    <property type="chains" value="a=1-838"/>
</dbReference>
<dbReference type="PDB" id="9BRQ">
    <property type="method" value="EM"/>
    <property type="resolution" value="4.30 A"/>
    <property type="chains" value="a=1-838"/>
</dbReference>
<dbReference type="PDB" id="9BRR">
    <property type="method" value="EM"/>
    <property type="resolution" value="4.50 A"/>
    <property type="chains" value="a=1-838"/>
</dbReference>
<dbReference type="PDB" id="9BRS">
    <property type="method" value="EM"/>
    <property type="resolution" value="4.40 A"/>
    <property type="chains" value="a=1-838"/>
</dbReference>
<dbReference type="PDB" id="9BRT">
    <property type="method" value="EM"/>
    <property type="resolution" value="4.30 A"/>
    <property type="chains" value="a=1-838"/>
</dbReference>
<dbReference type="PDB" id="9BRU">
    <property type="method" value="EM"/>
    <property type="resolution" value="4.40 A"/>
    <property type="chains" value="a=1-838"/>
</dbReference>
<dbReference type="PDB" id="9BRY">
    <property type="method" value="EM"/>
    <property type="resolution" value="3.60 A"/>
    <property type="chains" value="a=1-838"/>
</dbReference>
<dbReference type="PDB" id="9BRZ">
    <property type="method" value="EM"/>
    <property type="resolution" value="3.80 A"/>
    <property type="chains" value="a=1-838"/>
</dbReference>
<dbReference type="PDBsum" id="9BRA"/>
<dbReference type="PDBsum" id="9BRQ"/>
<dbReference type="PDBsum" id="9BRR"/>
<dbReference type="PDBsum" id="9BRS"/>
<dbReference type="PDBsum" id="9BRT"/>
<dbReference type="PDBsum" id="9BRU"/>
<dbReference type="PDBsum" id="9BRY"/>
<dbReference type="PDBsum" id="9BRZ"/>
<dbReference type="EMDB" id="EMD-44839"/>
<dbReference type="EMDB" id="EMD-44840"/>
<dbReference type="EMDB" id="EMD-44841"/>
<dbReference type="EMDB" id="EMD-44842"/>
<dbReference type="EMDB" id="EMD-44843"/>
<dbReference type="EMDB" id="EMD-44844"/>
<dbReference type="EMDB" id="EMD-44845"/>
<dbReference type="EMDB" id="EMD-44846"/>
<dbReference type="SMR" id="Q9Z1G4"/>
<dbReference type="BioGRID" id="198267">
    <property type="interactions" value="15"/>
</dbReference>
<dbReference type="FunCoup" id="Q9Z1G4">
    <property type="interactions" value="3486"/>
</dbReference>
<dbReference type="IntAct" id="Q9Z1G4">
    <property type="interactions" value="5"/>
</dbReference>
<dbReference type="MINT" id="Q9Z1G4"/>
<dbReference type="STRING" id="10090.ENSMUSP00000099399"/>
<dbReference type="TCDB" id="3.A.2.2.6">
    <property type="family name" value="the h+- or na+-translocating f-type, v-type and a-type atpase (f-atpase) superfamily"/>
</dbReference>
<dbReference type="GlyGen" id="Q9Z1G4">
    <property type="glycosylation" value="2 sites, 1 O-linked glycan (1 site)"/>
</dbReference>
<dbReference type="iPTMnet" id="Q9Z1G4"/>
<dbReference type="PhosphoSitePlus" id="Q9Z1G4"/>
<dbReference type="SwissPalm" id="Q9Z1G4"/>
<dbReference type="jPOST" id="Q9Z1G4"/>
<dbReference type="PaxDb" id="10090-ENSMUSP00000044838"/>
<dbReference type="PeptideAtlas" id="Q9Z1G4"/>
<dbReference type="ProteomicsDB" id="300178">
    <molecule id="Q9Z1G4-1"/>
</dbReference>
<dbReference type="ProteomicsDB" id="300179">
    <molecule id="Q9Z1G4-2"/>
</dbReference>
<dbReference type="ProteomicsDB" id="300180">
    <molecule id="Q9Z1G4-3"/>
</dbReference>
<dbReference type="Pumba" id="Q9Z1G4"/>
<dbReference type="Antibodypedia" id="16938">
    <property type="antibodies" value="99 antibodies from 21 providers"/>
</dbReference>
<dbReference type="DNASU" id="11975"/>
<dbReference type="Ensembl" id="ENSMUST00000044721.13">
    <molecule id="Q9Z1G4-2"/>
    <property type="protein sequence ID" value="ENSMUSP00000044838.7"/>
    <property type="gene ID" value="ENSMUSG00000019302.18"/>
</dbReference>
<dbReference type="Ensembl" id="ENSMUST00000092663.4">
    <molecule id="Q9Z1G4-3"/>
    <property type="protein sequence ID" value="ENSMUSP00000090333.4"/>
    <property type="gene ID" value="ENSMUSG00000019302.18"/>
</dbReference>
<dbReference type="Ensembl" id="ENSMUST00000103110.10">
    <molecule id="Q9Z1G4-1"/>
    <property type="protein sequence ID" value="ENSMUSP00000099399.4"/>
    <property type="gene ID" value="ENSMUSG00000019302.18"/>
</dbReference>
<dbReference type="GeneID" id="11975"/>
<dbReference type="KEGG" id="mmu:11975"/>
<dbReference type="UCSC" id="uc007lmt.2">
    <molecule id="Q9Z1G4-3"/>
    <property type="organism name" value="mouse"/>
</dbReference>
<dbReference type="UCSC" id="uc007lmu.2">
    <molecule id="Q9Z1G4-2"/>
    <property type="organism name" value="mouse"/>
</dbReference>
<dbReference type="UCSC" id="uc007lmx.2">
    <molecule id="Q9Z1G4-1"/>
    <property type="organism name" value="mouse"/>
</dbReference>
<dbReference type="AGR" id="MGI:103286"/>
<dbReference type="CTD" id="535"/>
<dbReference type="MGI" id="MGI:103286">
    <property type="gene designation" value="Atp6v0a1"/>
</dbReference>
<dbReference type="VEuPathDB" id="HostDB:ENSMUSG00000019302"/>
<dbReference type="eggNOG" id="KOG2189">
    <property type="taxonomic scope" value="Eukaryota"/>
</dbReference>
<dbReference type="GeneTree" id="ENSGT00950000182881"/>
<dbReference type="HOGENOM" id="CLU_005230_0_1_1"/>
<dbReference type="InParanoid" id="Q9Z1G4"/>
<dbReference type="OMA" id="FYLWFFL"/>
<dbReference type="OrthoDB" id="10264220at2759"/>
<dbReference type="PhylomeDB" id="Q9Z1G4"/>
<dbReference type="TreeFam" id="TF300346"/>
<dbReference type="Reactome" id="R-MMU-1222556">
    <property type="pathway name" value="ROS and RNS production in phagocytes"/>
</dbReference>
<dbReference type="Reactome" id="R-MMU-6798695">
    <property type="pathway name" value="Neutrophil degranulation"/>
</dbReference>
<dbReference type="Reactome" id="R-MMU-77387">
    <property type="pathway name" value="Insulin receptor recycling"/>
</dbReference>
<dbReference type="Reactome" id="R-MMU-917977">
    <property type="pathway name" value="Transferrin endocytosis and recycling"/>
</dbReference>
<dbReference type="Reactome" id="R-MMU-983712">
    <property type="pathway name" value="Ion channel transport"/>
</dbReference>
<dbReference type="BioGRID-ORCS" id="11975">
    <property type="hits" value="10 hits in 77 CRISPR screens"/>
</dbReference>
<dbReference type="CD-CODE" id="CE726F99">
    <property type="entry name" value="Postsynaptic density"/>
</dbReference>
<dbReference type="ChiTaRS" id="Atp6v0a1">
    <property type="organism name" value="mouse"/>
</dbReference>
<dbReference type="PRO" id="PR:Q9Z1G4"/>
<dbReference type="Proteomes" id="UP000000589">
    <property type="component" value="Chromosome 11"/>
</dbReference>
<dbReference type="RNAct" id="Q9Z1G4">
    <property type="molecule type" value="protein"/>
</dbReference>
<dbReference type="Bgee" id="ENSMUSG00000019302">
    <property type="expression patterns" value="Expressed in superior frontal gyrus and 254 other cell types or tissues"/>
</dbReference>
<dbReference type="ExpressionAtlas" id="Q9Z1G4">
    <property type="expression patterns" value="baseline and differential"/>
</dbReference>
<dbReference type="GO" id="GO:0030665">
    <property type="term" value="C:clathrin-coated vesicle membrane"/>
    <property type="evidence" value="ECO:0007669"/>
    <property type="project" value="UniProtKB-SubCell"/>
</dbReference>
<dbReference type="GO" id="GO:0005737">
    <property type="term" value="C:cytoplasm"/>
    <property type="evidence" value="ECO:0000314"/>
    <property type="project" value="MGI"/>
</dbReference>
<dbReference type="GO" id="GO:0005829">
    <property type="term" value="C:cytosol"/>
    <property type="evidence" value="ECO:0007669"/>
    <property type="project" value="Ensembl"/>
</dbReference>
<dbReference type="GO" id="GO:0005794">
    <property type="term" value="C:Golgi apparatus"/>
    <property type="evidence" value="ECO:0007669"/>
    <property type="project" value="Ensembl"/>
</dbReference>
<dbReference type="GO" id="GO:0042470">
    <property type="term" value="C:melanosome"/>
    <property type="evidence" value="ECO:0007669"/>
    <property type="project" value="UniProtKB-SubCell"/>
</dbReference>
<dbReference type="GO" id="GO:0016607">
    <property type="term" value="C:nuclear speck"/>
    <property type="evidence" value="ECO:0007669"/>
    <property type="project" value="Ensembl"/>
</dbReference>
<dbReference type="GO" id="GO:0048471">
    <property type="term" value="C:perinuclear region of cytoplasm"/>
    <property type="evidence" value="ECO:0000314"/>
    <property type="project" value="MGI"/>
</dbReference>
<dbReference type="GO" id="GO:0005886">
    <property type="term" value="C:plasma membrane"/>
    <property type="evidence" value="ECO:0007669"/>
    <property type="project" value="Ensembl"/>
</dbReference>
<dbReference type="GO" id="GO:0030672">
    <property type="term" value="C:synaptic vesicle membrane"/>
    <property type="evidence" value="ECO:0007669"/>
    <property type="project" value="UniProtKB-SubCell"/>
</dbReference>
<dbReference type="GO" id="GO:0000220">
    <property type="term" value="C:vacuolar proton-transporting V-type ATPase, V0 domain"/>
    <property type="evidence" value="ECO:0000250"/>
    <property type="project" value="UniProtKB"/>
</dbReference>
<dbReference type="GO" id="GO:0051117">
    <property type="term" value="F:ATPase binding"/>
    <property type="evidence" value="ECO:0007669"/>
    <property type="project" value="Ensembl"/>
</dbReference>
<dbReference type="GO" id="GO:0046961">
    <property type="term" value="F:proton-transporting ATPase activity, rotational mechanism"/>
    <property type="evidence" value="ECO:0007669"/>
    <property type="project" value="InterPro"/>
</dbReference>
<dbReference type="GO" id="GO:0016241">
    <property type="term" value="P:regulation of macroautophagy"/>
    <property type="evidence" value="ECO:0007669"/>
    <property type="project" value="Ensembl"/>
</dbReference>
<dbReference type="GO" id="GO:0097401">
    <property type="term" value="P:synaptic vesicle lumen acidification"/>
    <property type="evidence" value="ECO:0000314"/>
    <property type="project" value="SynGO"/>
</dbReference>
<dbReference type="InterPro" id="IPR002490">
    <property type="entry name" value="V-ATPase_116kDa_su"/>
</dbReference>
<dbReference type="InterPro" id="IPR026028">
    <property type="entry name" value="V-type_ATPase_116kDa_su_euka"/>
</dbReference>
<dbReference type="PANTHER" id="PTHR11629:SF68">
    <property type="entry name" value="V-TYPE PROTON ATPASE 116 KDA SUBUNIT A 1"/>
    <property type="match status" value="1"/>
</dbReference>
<dbReference type="PANTHER" id="PTHR11629">
    <property type="entry name" value="VACUOLAR PROTON ATPASES"/>
    <property type="match status" value="1"/>
</dbReference>
<dbReference type="Pfam" id="PF01496">
    <property type="entry name" value="V_ATPase_I"/>
    <property type="match status" value="1"/>
</dbReference>
<dbReference type="PIRSF" id="PIRSF001293">
    <property type="entry name" value="ATP6V0A1"/>
    <property type="match status" value="1"/>
</dbReference>
<comment type="function">
    <text evidence="2 3 4 7">Subunit of the V0 complex of vacuolar(H+)-ATPase (V-ATPase), a multisubunit enzyme composed of a peripheral complex (V1) that hydrolyzes ATP and a membrane integral complex (V0) that translocates protons (By similarity). V-ATPase is responsible for the acidification of various organelles, such as lysosomes, endosomes, the trans-Golgi network, and secretory granules, including synaptic vesicles. In certain cell types, can be exported to the plasma membrane, where it is involved in the acidification of the extracellular environment (By similarity). Required for assembly and activity of the vacuolar ATPase (By similarity). Through its action on compartment acidification, plays an essential role in neuronal development in terms of integrity and connectivity of neurons (PubMed:33833240).</text>
</comment>
<comment type="subunit">
    <text evidence="4 6">V-ATPase is a heteromultimeric enzyme made up of two complexes: the ATP-hydrolytic V1 complex and the proton translocation V0 complex (By similarity). The V1 complex consists of three catalytic AB heterodimers that form a heterohexamer, three peripheral stalks each consisting of EG heterodimers, one central rotor including subunits D and F, and the regulatory subunits C and H (By similarity). The proton translocation complex V0 consists of the proton transport subunit a, a ring of proteolipid subunits c9c'', rotary subunit d, subunits e and f, and the accessory subunits ATP6AP1/Ac45 and ATP6AP2/PRR (By similarity). Interacts with SPAAR (PubMed:28024296).</text>
</comment>
<comment type="interaction">
    <interactant intactId="EBI-771149">
        <id>Q9Z1G4</id>
    </interactant>
    <interactant intactId="EBI-990067">
        <id>P49769</id>
        <label>Psen1</label>
    </interactant>
    <organismsDiffer>false</organismsDiffer>
    <experiments>2</experiments>
</comment>
<comment type="subcellular location">
    <subcellularLocation>
        <location evidence="1">Cytoplasmic vesicle</location>
        <location evidence="1">Clathrin-coated vesicle membrane</location>
        <topology evidence="5">Multi-pass membrane protein</topology>
    </subcellularLocation>
    <subcellularLocation>
        <location evidence="1">Cytoplasmic vesicle</location>
        <location evidence="1">Secretory vesicle</location>
        <location evidence="1">Synaptic vesicle membrane</location>
        <topology evidence="5">Multi-pass membrane protein</topology>
    </subcellularLocation>
    <subcellularLocation>
        <location evidence="4">Melanosome</location>
    </subcellularLocation>
</comment>
<comment type="alternative products">
    <event type="alternative splicing"/>
    <isoform>
        <id>Q9Z1G4-1</id>
        <name>A1-II</name>
        <sequence type="displayed"/>
    </isoform>
    <isoform>
        <id>Q9Z1G4-2</id>
        <name>A1-I</name>
        <sequence type="described" ref="VSP_000342 VSP_000343"/>
    </isoform>
    <isoform>
        <id>Q9Z1G4-3</id>
        <name>A1-III</name>
        <sequence type="described" ref="VSP_000342"/>
    </isoform>
</comment>
<comment type="tissue specificity">
    <text evidence="7">Predominantly expressed in neurons in the cortex and in the dentate gyrus, CA1 and CA3 regions of the hippocampus (at protein level) (PubMed:33833240). Expressed at lower levels in astrocytes, oligodendrocytes and microglia (at protein level) (PubMed:33833240). In the cerebellum, present in Purkinje and granule cells (at protein level) (PubMed:33833240).</text>
</comment>
<comment type="disruption phenotype">
    <text evidence="7">Embryonic lethal. Knockout embryos die at 5 to 6 dpc, before gastrulation.</text>
</comment>
<comment type="similarity">
    <text evidence="9">Belongs to the V-ATPase 116 kDa subunit family.</text>
</comment>
<name>VPP1_MOUSE</name>
<gene>
    <name type="primary">Atp6v0a1</name>
    <name type="synonym">Atp6n1</name>
</gene>
<evidence type="ECO:0000250" key="1">
    <source>
        <dbReference type="UniProtKB" id="P25286"/>
    </source>
</evidence>
<evidence type="ECO:0000250" key="2">
    <source>
        <dbReference type="UniProtKB" id="P32563"/>
    </source>
</evidence>
<evidence type="ECO:0000250" key="3">
    <source>
        <dbReference type="UniProtKB" id="Q29466"/>
    </source>
</evidence>
<evidence type="ECO:0000250" key="4">
    <source>
        <dbReference type="UniProtKB" id="Q93050"/>
    </source>
</evidence>
<evidence type="ECO:0000255" key="5"/>
<evidence type="ECO:0000269" key="6">
    <source>
    </source>
</evidence>
<evidence type="ECO:0000269" key="7">
    <source>
    </source>
</evidence>
<evidence type="ECO:0000303" key="8">
    <source>
    </source>
</evidence>
<evidence type="ECO:0000305" key="9"/>
<evidence type="ECO:0007744" key="10">
    <source>
    </source>
</evidence>
<evidence type="ECO:0007744" key="11">
    <source>
    </source>
</evidence>
<accession>Q9Z1G4</accession>
<accession>A2A5A1</accession>
<accession>Q9JHJ4</accession>
<accession>Q9JL13</accession>
<accession>Q9JL14</accession>
<reference key="1">
    <citation type="submission" date="1994-08" db="EMBL/GenBank/DDBJ databases">
        <title>cDNA sequences for mouse vacuolar ATPase subunits.</title>
        <authorList>
            <person name="Howell M.L."/>
            <person name="Dean G.E."/>
        </authorList>
    </citation>
    <scope>NUCLEOTIDE SEQUENCE [MRNA] (ISOFORM A1-II)</scope>
</reference>
<reference key="2">
    <citation type="journal article" date="2000" name="J. Biol. Chem.">
        <title>Molecular cloning and expression of three isoforms of the 100-kDa a subunit of the mouse vacuolar proton-translocating ATPase.</title>
        <authorList>
            <person name="Nishi T."/>
            <person name="Forgac M."/>
        </authorList>
    </citation>
    <scope>NUCLEOTIDE SEQUENCE [MRNA]</scope>
    <scope>ALTERNATIVE SPLICING</scope>
    <source>
        <tissue>Liver</tissue>
    </source>
</reference>
<reference key="3">
    <citation type="journal article" date="2000" name="J. Biol. Chem.">
        <title>Three subunit a isoforms of mouse vacuolar H+-ATPase. Preferential expression of the a3 isoform during osteoclast differentiation.</title>
        <authorList>
            <person name="Toyomura T."/>
            <person name="Oka T."/>
            <person name="Yamaguchi C."/>
            <person name="Wada Y."/>
            <person name="Futai M."/>
        </authorList>
    </citation>
    <scope>NUCLEOTIDE SEQUENCE [MRNA] (ISOFORM A1-III)</scope>
</reference>
<reference key="4">
    <citation type="submission" date="2005-07" db="EMBL/GenBank/DDBJ databases">
        <authorList>
            <person name="Mural R.J."/>
            <person name="Adams M.D."/>
            <person name="Myers E.W."/>
            <person name="Smith H.O."/>
            <person name="Venter J.C."/>
        </authorList>
    </citation>
    <scope>NUCLEOTIDE SEQUENCE [LARGE SCALE GENOMIC DNA]</scope>
</reference>
<reference key="5">
    <citation type="journal article" date="2009" name="PLoS Biol.">
        <title>Lineage-specific biology revealed by a finished genome assembly of the mouse.</title>
        <authorList>
            <person name="Church D.M."/>
            <person name="Goodstadt L."/>
            <person name="Hillier L.W."/>
            <person name="Zody M.C."/>
            <person name="Goldstein S."/>
            <person name="She X."/>
            <person name="Bult C.J."/>
            <person name="Agarwala R."/>
            <person name="Cherry J.L."/>
            <person name="DiCuccio M."/>
            <person name="Hlavina W."/>
            <person name="Kapustin Y."/>
            <person name="Meric P."/>
            <person name="Maglott D."/>
            <person name="Birtle Z."/>
            <person name="Marques A.C."/>
            <person name="Graves T."/>
            <person name="Zhou S."/>
            <person name="Teague B."/>
            <person name="Potamousis K."/>
            <person name="Churas C."/>
            <person name="Place M."/>
            <person name="Herschleb J."/>
            <person name="Runnheim R."/>
            <person name="Forrest D."/>
            <person name="Amos-Landgraf J."/>
            <person name="Schwartz D.C."/>
            <person name="Cheng Z."/>
            <person name="Lindblad-Toh K."/>
            <person name="Eichler E.E."/>
            <person name="Ponting C.P."/>
        </authorList>
    </citation>
    <scope>NUCLEOTIDE SEQUENCE [LARGE SCALE GENOMIC DNA]</scope>
    <source>
        <strain>C57BL/6J</strain>
    </source>
</reference>
<reference key="6">
    <citation type="submission" date="2007-04" db="UniProtKB">
        <authorList>
            <person name="Lubec G."/>
            <person name="Kang S.U."/>
        </authorList>
    </citation>
    <scope>PROTEIN SEQUENCE OF 39-49; 75-103; 121-129; 175-184; 206-239; 272-286; 347-361; 377-394; 537-544; 675-685 AND 816-833</scope>
    <scope>IDENTIFICATION BY MASS SPECTROMETRY</scope>
    <source>
        <strain>C57BL/6J</strain>
        <tissue>Brain</tissue>
    </source>
</reference>
<reference key="7">
    <citation type="journal article" date="2008" name="J. Proteome Res.">
        <title>Large-scale identification and evolution indexing of tyrosine phosphorylation sites from murine brain.</title>
        <authorList>
            <person name="Ballif B.A."/>
            <person name="Carey G.R."/>
            <person name="Sunyaev S.R."/>
            <person name="Gygi S.P."/>
        </authorList>
    </citation>
    <scope>PHOSPHORYLATION [LARGE SCALE ANALYSIS] AT TYR-371</scope>
    <scope>IDENTIFICATION BY MASS SPECTROMETRY [LARGE SCALE ANALYSIS]</scope>
    <source>
        <tissue>Brain</tissue>
    </source>
</reference>
<reference key="8">
    <citation type="journal article" date="2010" name="Cell">
        <title>A tissue-specific atlas of mouse protein phosphorylation and expression.</title>
        <authorList>
            <person name="Huttlin E.L."/>
            <person name="Jedrychowski M.P."/>
            <person name="Elias J.E."/>
            <person name="Goswami T."/>
            <person name="Rad R."/>
            <person name="Beausoleil S.A."/>
            <person name="Villen J."/>
            <person name="Haas W."/>
            <person name="Sowa M.E."/>
            <person name="Gygi S.P."/>
        </authorList>
    </citation>
    <scope>PHOSPHORYLATION [LARGE SCALE ANALYSIS] AT THR-257</scope>
    <scope>IDENTIFICATION BY MASS SPECTROMETRY [LARGE SCALE ANALYSIS]</scope>
    <source>
        <tissue>Brain</tissue>
        <tissue>Brown adipose tissue</tissue>
        <tissue>Heart</tissue>
        <tissue>Liver</tissue>
        <tissue>Lung</tissue>
        <tissue>Spleen</tissue>
        <tissue>Testis</tissue>
    </source>
</reference>
<reference key="9">
    <citation type="journal article" date="2017" name="Nature">
        <title>mTORC1 and muscle regeneration are regulated by the LINC00961-encoded SPAR polypeptide.</title>
        <authorList>
            <person name="Matsumoto A."/>
            <person name="Pasut A."/>
            <person name="Matsumoto M."/>
            <person name="Yamashita R."/>
            <person name="Fung J."/>
            <person name="Monteleone E."/>
            <person name="Saghatelian A."/>
            <person name="Nakayama K.I."/>
            <person name="Clohessy J.G."/>
            <person name="Pandolfi P.P."/>
        </authorList>
    </citation>
    <scope>INTERACTION WITH SPAAR</scope>
</reference>
<reference key="10">
    <citation type="journal article" date="2021" name="Nat. Commun.">
        <title>ATP6V0A1 encoding the a1-subunit of the V0 domain of vacuolar H+-ATPases is essential for brain development in humans and mice.</title>
        <authorList>
            <person name="Aoto K."/>
            <person name="Kato M."/>
            <person name="Akita T."/>
            <person name="Nakashima M."/>
            <person name="Mutoh H."/>
            <person name="Akasaka N."/>
            <person name="Tohyama J."/>
            <person name="Nomura Y."/>
            <person name="Hoshino K."/>
            <person name="Ago Y."/>
            <person name="Tanaka R."/>
            <person name="Epstein O."/>
            <person name="Ben-Haim R."/>
            <person name="Heyman E."/>
            <person name="Miyazaki T."/>
            <person name="Belal H."/>
            <person name="Takabayashi S."/>
            <person name="Ohba C."/>
            <person name="Takata A."/>
            <person name="Mizuguchi T."/>
            <person name="Miyatake S."/>
            <person name="Miyake N."/>
            <person name="Fukuda A."/>
            <person name="Matsumoto N."/>
            <person name="Saitsu H."/>
        </authorList>
    </citation>
    <scope>FUNCTION</scope>
    <scope>TISSUE SPECIFICITY</scope>
    <scope>DISRUPTION PHENOTYPE</scope>
</reference>